<name>DDIT4_HUMAN</name>
<keyword id="KW-0002">3D-structure</keyword>
<keyword id="KW-0051">Antiviral defense</keyword>
<keyword id="KW-0053">Apoptosis</keyword>
<keyword id="KW-0963">Cytoplasm</keyword>
<keyword id="KW-0903">Direct protein sequencing</keyword>
<keyword id="KW-0496">Mitochondrion</keyword>
<keyword id="KW-0597">Phosphoprotein</keyword>
<keyword id="KW-1267">Proteomics identification</keyword>
<keyword id="KW-1185">Reference proteome</keyword>
<keyword id="KW-0832">Ubl conjugation</keyword>
<reference key="1">
    <citation type="journal article" date="2002" name="Mol. Cell">
        <title>REDD1, a developmentally regulated transcriptional target of p63 and p53, links p63 to regulation of reactive oxygen species.</title>
        <authorList>
            <person name="Ellisen L.W."/>
            <person name="Ramsayer K.D."/>
            <person name="Johannessen C.M."/>
            <person name="Yang A."/>
            <person name="Beppu H."/>
            <person name="Minda K."/>
            <person name="Oliner J.D."/>
            <person name="McKeon F."/>
            <person name="Haber D.A."/>
        </authorList>
    </citation>
    <scope>NUCLEOTIDE SEQUENCE [MRNA]</scope>
    <scope>TISSUE SPECIFICITY</scope>
    <scope>INDUCTION BY DNA DAMAGE</scope>
    <scope>SUBCELLULAR LOCATION</scope>
    <source>
        <tissue>Fetal brain</tissue>
    </source>
</reference>
<reference key="2">
    <citation type="journal article" date="2002" name="Mol. Cell. Biol.">
        <title>Identification of a novel hypoxia-inducible factor 1-responsive gene, RTP801, involved in apoptosis.</title>
        <authorList>
            <person name="Shoshani T."/>
            <person name="Faerman A."/>
            <person name="Mett I."/>
            <person name="Zelin E."/>
            <person name="Tenne T."/>
            <person name="Gorodin S."/>
            <person name="Moshel Y."/>
            <person name="Elbaz S."/>
            <person name="Budanov A."/>
            <person name="Chajut A."/>
            <person name="Kalinski H."/>
            <person name="Kamer I."/>
            <person name="Rozen A."/>
            <person name="Mor O."/>
            <person name="Keshet E."/>
            <person name="Leshkowitz D."/>
            <person name="Einat P."/>
            <person name="Skaliter R."/>
            <person name="Feinstein E."/>
        </authorList>
    </citation>
    <scope>NUCLEOTIDE SEQUENCE [MRNA]</scope>
    <scope>TISSUE SPECIFICITY</scope>
    <scope>INDUCTION</scope>
</reference>
<reference key="3">
    <citation type="journal article" date="2001" name="Genome Res.">
        <title>Towards a catalog of human genes and proteins: sequencing and analysis of 500 novel complete protein coding human cDNAs.</title>
        <authorList>
            <person name="Wiemann S."/>
            <person name="Weil B."/>
            <person name="Wellenreuther R."/>
            <person name="Gassenhuber J."/>
            <person name="Glassl S."/>
            <person name="Ansorge W."/>
            <person name="Boecher M."/>
            <person name="Bloecker H."/>
            <person name="Bauersachs S."/>
            <person name="Blum H."/>
            <person name="Lauber J."/>
            <person name="Duesterhoeft A."/>
            <person name="Beyer A."/>
            <person name="Koehrer K."/>
            <person name="Strack N."/>
            <person name="Mewes H.-W."/>
            <person name="Ottenwaelder B."/>
            <person name="Obermaier B."/>
            <person name="Tampe J."/>
            <person name="Heubner D."/>
            <person name="Wambutt R."/>
            <person name="Korn B."/>
            <person name="Klein M."/>
            <person name="Poustka A."/>
        </authorList>
    </citation>
    <scope>NUCLEOTIDE SEQUENCE [LARGE SCALE MRNA]</scope>
    <source>
        <tissue>Brain</tissue>
    </source>
</reference>
<reference key="4">
    <citation type="journal article" date="2004" name="Nat. Genet.">
        <title>Complete sequencing and characterization of 21,243 full-length human cDNAs.</title>
        <authorList>
            <person name="Ota T."/>
            <person name="Suzuki Y."/>
            <person name="Nishikawa T."/>
            <person name="Otsuki T."/>
            <person name="Sugiyama T."/>
            <person name="Irie R."/>
            <person name="Wakamatsu A."/>
            <person name="Hayashi K."/>
            <person name="Sato H."/>
            <person name="Nagai K."/>
            <person name="Kimura K."/>
            <person name="Makita H."/>
            <person name="Sekine M."/>
            <person name="Obayashi M."/>
            <person name="Nishi T."/>
            <person name="Shibahara T."/>
            <person name="Tanaka T."/>
            <person name="Ishii S."/>
            <person name="Yamamoto J."/>
            <person name="Saito K."/>
            <person name="Kawai Y."/>
            <person name="Isono Y."/>
            <person name="Nakamura Y."/>
            <person name="Nagahari K."/>
            <person name="Murakami K."/>
            <person name="Yasuda T."/>
            <person name="Iwayanagi T."/>
            <person name="Wagatsuma M."/>
            <person name="Shiratori A."/>
            <person name="Sudo H."/>
            <person name="Hosoiri T."/>
            <person name="Kaku Y."/>
            <person name="Kodaira H."/>
            <person name="Kondo H."/>
            <person name="Sugawara M."/>
            <person name="Takahashi M."/>
            <person name="Kanda K."/>
            <person name="Yokoi T."/>
            <person name="Furuya T."/>
            <person name="Kikkawa E."/>
            <person name="Omura Y."/>
            <person name="Abe K."/>
            <person name="Kamihara K."/>
            <person name="Katsuta N."/>
            <person name="Sato K."/>
            <person name="Tanikawa M."/>
            <person name="Yamazaki M."/>
            <person name="Ninomiya K."/>
            <person name="Ishibashi T."/>
            <person name="Yamashita H."/>
            <person name="Murakawa K."/>
            <person name="Fujimori K."/>
            <person name="Tanai H."/>
            <person name="Kimata M."/>
            <person name="Watanabe M."/>
            <person name="Hiraoka S."/>
            <person name="Chiba Y."/>
            <person name="Ishida S."/>
            <person name="Ono Y."/>
            <person name="Takiguchi S."/>
            <person name="Watanabe S."/>
            <person name="Yosida M."/>
            <person name="Hotuta T."/>
            <person name="Kusano J."/>
            <person name="Kanehori K."/>
            <person name="Takahashi-Fujii A."/>
            <person name="Hara H."/>
            <person name="Tanase T.-O."/>
            <person name="Nomura Y."/>
            <person name="Togiya S."/>
            <person name="Komai F."/>
            <person name="Hara R."/>
            <person name="Takeuchi K."/>
            <person name="Arita M."/>
            <person name="Imose N."/>
            <person name="Musashino K."/>
            <person name="Yuuki H."/>
            <person name="Oshima A."/>
            <person name="Sasaki N."/>
            <person name="Aotsuka S."/>
            <person name="Yoshikawa Y."/>
            <person name="Matsunawa H."/>
            <person name="Ichihara T."/>
            <person name="Shiohata N."/>
            <person name="Sano S."/>
            <person name="Moriya S."/>
            <person name="Momiyama H."/>
            <person name="Satoh N."/>
            <person name="Takami S."/>
            <person name="Terashima Y."/>
            <person name="Suzuki O."/>
            <person name="Nakagawa S."/>
            <person name="Senoh A."/>
            <person name="Mizoguchi H."/>
            <person name="Goto Y."/>
            <person name="Shimizu F."/>
            <person name="Wakebe H."/>
            <person name="Hishigaki H."/>
            <person name="Watanabe T."/>
            <person name="Sugiyama A."/>
            <person name="Takemoto M."/>
            <person name="Kawakami B."/>
            <person name="Yamazaki M."/>
            <person name="Watanabe K."/>
            <person name="Kumagai A."/>
            <person name="Itakura S."/>
            <person name="Fukuzumi Y."/>
            <person name="Fujimori Y."/>
            <person name="Komiyama M."/>
            <person name="Tashiro H."/>
            <person name="Tanigami A."/>
            <person name="Fujiwara T."/>
            <person name="Ono T."/>
            <person name="Yamada K."/>
            <person name="Fujii Y."/>
            <person name="Ozaki K."/>
            <person name="Hirao M."/>
            <person name="Ohmori Y."/>
            <person name="Kawabata A."/>
            <person name="Hikiji T."/>
            <person name="Kobatake N."/>
            <person name="Inagaki H."/>
            <person name="Ikema Y."/>
            <person name="Okamoto S."/>
            <person name="Okitani R."/>
            <person name="Kawakami T."/>
            <person name="Noguchi S."/>
            <person name="Itoh T."/>
            <person name="Shigeta K."/>
            <person name="Senba T."/>
            <person name="Matsumura K."/>
            <person name="Nakajima Y."/>
            <person name="Mizuno T."/>
            <person name="Morinaga M."/>
            <person name="Sasaki M."/>
            <person name="Togashi T."/>
            <person name="Oyama M."/>
            <person name="Hata H."/>
            <person name="Watanabe M."/>
            <person name="Komatsu T."/>
            <person name="Mizushima-Sugano J."/>
            <person name="Satoh T."/>
            <person name="Shirai Y."/>
            <person name="Takahashi Y."/>
            <person name="Nakagawa K."/>
            <person name="Okumura K."/>
            <person name="Nagase T."/>
            <person name="Nomura N."/>
            <person name="Kikuchi H."/>
            <person name="Masuho Y."/>
            <person name="Yamashita R."/>
            <person name="Nakai K."/>
            <person name="Yada T."/>
            <person name="Nakamura Y."/>
            <person name="Ohara O."/>
            <person name="Isogai T."/>
            <person name="Sugano S."/>
        </authorList>
    </citation>
    <scope>NUCLEOTIDE SEQUENCE [LARGE SCALE MRNA]</scope>
</reference>
<reference key="5">
    <citation type="journal article" date="2004" name="Nature">
        <title>The DNA sequence and comparative analysis of human chromosome 10.</title>
        <authorList>
            <person name="Deloukas P."/>
            <person name="Earthrowl M.E."/>
            <person name="Grafham D.V."/>
            <person name="Rubenfield M."/>
            <person name="French L."/>
            <person name="Steward C.A."/>
            <person name="Sims S.K."/>
            <person name="Jones M.C."/>
            <person name="Searle S."/>
            <person name="Scott C."/>
            <person name="Howe K."/>
            <person name="Hunt S.E."/>
            <person name="Andrews T.D."/>
            <person name="Gilbert J.G.R."/>
            <person name="Swarbreck D."/>
            <person name="Ashurst J.L."/>
            <person name="Taylor A."/>
            <person name="Battles J."/>
            <person name="Bird C.P."/>
            <person name="Ainscough R."/>
            <person name="Almeida J.P."/>
            <person name="Ashwell R.I.S."/>
            <person name="Ambrose K.D."/>
            <person name="Babbage A.K."/>
            <person name="Bagguley C.L."/>
            <person name="Bailey J."/>
            <person name="Banerjee R."/>
            <person name="Bates K."/>
            <person name="Beasley H."/>
            <person name="Bray-Allen S."/>
            <person name="Brown A.J."/>
            <person name="Brown J.Y."/>
            <person name="Burford D.C."/>
            <person name="Burrill W."/>
            <person name="Burton J."/>
            <person name="Cahill P."/>
            <person name="Camire D."/>
            <person name="Carter N.P."/>
            <person name="Chapman J.C."/>
            <person name="Clark S.Y."/>
            <person name="Clarke G."/>
            <person name="Clee C.M."/>
            <person name="Clegg S."/>
            <person name="Corby N."/>
            <person name="Coulson A."/>
            <person name="Dhami P."/>
            <person name="Dutta I."/>
            <person name="Dunn M."/>
            <person name="Faulkner L."/>
            <person name="Frankish A."/>
            <person name="Frankland J.A."/>
            <person name="Garner P."/>
            <person name="Garnett J."/>
            <person name="Gribble S."/>
            <person name="Griffiths C."/>
            <person name="Grocock R."/>
            <person name="Gustafson E."/>
            <person name="Hammond S."/>
            <person name="Harley J.L."/>
            <person name="Hart E."/>
            <person name="Heath P.D."/>
            <person name="Ho T.P."/>
            <person name="Hopkins B."/>
            <person name="Horne J."/>
            <person name="Howden P.J."/>
            <person name="Huckle E."/>
            <person name="Hynds C."/>
            <person name="Johnson C."/>
            <person name="Johnson D."/>
            <person name="Kana A."/>
            <person name="Kay M."/>
            <person name="Kimberley A.M."/>
            <person name="Kershaw J.K."/>
            <person name="Kokkinaki M."/>
            <person name="Laird G.K."/>
            <person name="Lawlor S."/>
            <person name="Lee H.M."/>
            <person name="Leongamornlert D.A."/>
            <person name="Laird G."/>
            <person name="Lloyd C."/>
            <person name="Lloyd D.M."/>
            <person name="Loveland J."/>
            <person name="Lovell J."/>
            <person name="McLaren S."/>
            <person name="McLay K.E."/>
            <person name="McMurray A."/>
            <person name="Mashreghi-Mohammadi M."/>
            <person name="Matthews L."/>
            <person name="Milne S."/>
            <person name="Nickerson T."/>
            <person name="Nguyen M."/>
            <person name="Overton-Larty E."/>
            <person name="Palmer S.A."/>
            <person name="Pearce A.V."/>
            <person name="Peck A.I."/>
            <person name="Pelan S."/>
            <person name="Phillimore B."/>
            <person name="Porter K."/>
            <person name="Rice C.M."/>
            <person name="Rogosin A."/>
            <person name="Ross M.T."/>
            <person name="Sarafidou T."/>
            <person name="Sehra H.K."/>
            <person name="Shownkeen R."/>
            <person name="Skuce C.D."/>
            <person name="Smith M."/>
            <person name="Standring L."/>
            <person name="Sycamore N."/>
            <person name="Tester J."/>
            <person name="Thorpe A."/>
            <person name="Torcasso W."/>
            <person name="Tracey A."/>
            <person name="Tromans A."/>
            <person name="Tsolas J."/>
            <person name="Wall M."/>
            <person name="Walsh J."/>
            <person name="Wang H."/>
            <person name="Weinstock K."/>
            <person name="West A.P."/>
            <person name="Willey D.L."/>
            <person name="Whitehead S.L."/>
            <person name="Wilming L."/>
            <person name="Wray P.W."/>
            <person name="Young L."/>
            <person name="Chen Y."/>
            <person name="Lovering R.C."/>
            <person name="Moschonas N.K."/>
            <person name="Siebert R."/>
            <person name="Fechtel K."/>
            <person name="Bentley D."/>
            <person name="Durbin R.M."/>
            <person name="Hubbard T."/>
            <person name="Doucette-Stamm L."/>
            <person name="Beck S."/>
            <person name="Smith D.R."/>
            <person name="Rogers J."/>
        </authorList>
    </citation>
    <scope>NUCLEOTIDE SEQUENCE [LARGE SCALE GENOMIC DNA]</scope>
</reference>
<reference key="6">
    <citation type="submission" date="2005-07" db="EMBL/GenBank/DDBJ databases">
        <authorList>
            <person name="Mural R.J."/>
            <person name="Istrail S."/>
            <person name="Sutton G.G."/>
            <person name="Florea L."/>
            <person name="Halpern A.L."/>
            <person name="Mobarry C.M."/>
            <person name="Lippert R."/>
            <person name="Walenz B."/>
            <person name="Shatkay H."/>
            <person name="Dew I."/>
            <person name="Miller J.R."/>
            <person name="Flanigan M.J."/>
            <person name="Edwards N.J."/>
            <person name="Bolanos R."/>
            <person name="Fasulo D."/>
            <person name="Halldorsson B.V."/>
            <person name="Hannenhalli S."/>
            <person name="Turner R."/>
            <person name="Yooseph S."/>
            <person name="Lu F."/>
            <person name="Nusskern D.R."/>
            <person name="Shue B.C."/>
            <person name="Zheng X.H."/>
            <person name="Zhong F."/>
            <person name="Delcher A.L."/>
            <person name="Huson D.H."/>
            <person name="Kravitz S.A."/>
            <person name="Mouchard L."/>
            <person name="Reinert K."/>
            <person name="Remington K.A."/>
            <person name="Clark A.G."/>
            <person name="Waterman M.S."/>
            <person name="Eichler E.E."/>
            <person name="Adams M.D."/>
            <person name="Hunkapiller M.W."/>
            <person name="Myers E.W."/>
            <person name="Venter J.C."/>
        </authorList>
    </citation>
    <scope>NUCLEOTIDE SEQUENCE [LARGE SCALE GENOMIC DNA]</scope>
</reference>
<reference key="7">
    <citation type="journal article" date="2004" name="Genome Res.">
        <title>The status, quality, and expansion of the NIH full-length cDNA project: the Mammalian Gene Collection (MGC).</title>
        <authorList>
            <consortium name="The MGC Project Team"/>
        </authorList>
    </citation>
    <scope>NUCLEOTIDE SEQUENCE [LARGE SCALE MRNA]</scope>
    <source>
        <tissue>Kidney</tissue>
        <tissue>Uterus</tissue>
    </source>
</reference>
<reference key="8">
    <citation type="journal article" date="2003" name="Exp. Mol. Med.">
        <title>Identification of amyloid beta-peptide responsive genes by cDNA microarray technology: involvement of RTP801 in amyloid beta-peptide toxicity.</title>
        <authorList>
            <person name="Kim J.-R."/>
            <person name="Lee S.-R."/>
            <person name="Chung H.J."/>
            <person name="Kim S."/>
            <person name="Baek S.-H."/>
            <person name="Kim J.H."/>
            <person name="Kim Y.-S."/>
        </authorList>
    </citation>
    <scope>INDUCTION</scope>
</reference>
<reference key="9">
    <citation type="journal article" date="2004" name="Genes Dev.">
        <title>Regulation of mTOR function in response to hypoxia by REDD1 and the TSC1/TSC2 tumor suppressor complex.</title>
        <authorList>
            <person name="Brugarolas J."/>
            <person name="Lei K."/>
            <person name="Hurley R.L."/>
            <person name="Manning B.D."/>
            <person name="Reiling J.H."/>
            <person name="Hafen E."/>
            <person name="Witters L.A."/>
            <person name="Ellisen L.W."/>
            <person name="Kaelin W.G. Jr."/>
        </authorList>
    </citation>
    <scope>FUNCTION</scope>
</reference>
<reference key="10">
    <citation type="journal article" date="2005" name="Biochemistry">
        <title>Induction of a cell stress response gene RTP801 by DNA damaging agent methyl methanesulfonate through CCAAT/enhancer binding protein.</title>
        <authorList>
            <person name="Lin L."/>
            <person name="Qian Y."/>
            <person name="Shi X."/>
            <person name="Chen Y."/>
        </authorList>
    </citation>
    <scope>INDUCTION</scope>
</reference>
<reference key="11">
    <citation type="journal article" date="2005" name="J. Biol. Chem.">
        <title>The stress-inducted proteins RTP801 and RTP801L are negative regulators of the mammalian target of rapamycin pathway.</title>
        <authorList>
            <person name="Corradetti M.N."/>
            <person name="Inoki K."/>
            <person name="Guan K.-L."/>
        </authorList>
    </citation>
    <scope>FUNCTION</scope>
</reference>
<reference key="12">
    <citation type="journal article" date="2005" name="Mol. Cell. Biol.">
        <title>Regulation of mTOR and cell growth in response to energy stress by REDD1.</title>
        <authorList>
            <person name="Sofer A."/>
            <person name="Lei K."/>
            <person name="Johannessen C.M."/>
            <person name="Ellisen L.W."/>
        </authorList>
    </citation>
    <scope>FUNCTION</scope>
</reference>
<reference key="13">
    <citation type="journal article" date="2005" name="Oncogene">
        <title>REDD1 integrates hypoxia-mediated survival signaling downstream of phosphatidylinositol 3-kinase.</title>
        <authorList>
            <person name="Schwarzer R."/>
            <person name="Tondera D."/>
            <person name="Arnold W."/>
            <person name="Giese K."/>
            <person name="Klippel A."/>
            <person name="Kaufmann J."/>
        </authorList>
    </citation>
    <scope>INDUCTION</scope>
</reference>
<reference key="14">
    <citation type="journal article" date="2006" name="J. Neurosci.">
        <title>RTP801 is elevated in Parkinson brain substantia nigral neurons and mediates death in cellular models of Parkinson's disease by a mechanism involving mammalian target of rapamycin inactivation.</title>
        <authorList>
            <person name="Malagelada C."/>
            <person name="Ryu E.J."/>
            <person name="Biswas S.C."/>
            <person name="Jackson-Lewis V."/>
            <person name="Greene L.A."/>
        </authorList>
    </citation>
    <scope>FUNCTION</scope>
    <scope>TISSUE SPECIFICITY</scope>
</reference>
<reference key="15">
    <citation type="journal article" date="2007" name="Exp. Hematol.">
        <title>RTP801 is a novel retinoic acid-responsive gene associated with myeloid differentiation.</title>
        <authorList>
            <person name="Gery S."/>
            <person name="Park D.J."/>
            <person name="Vuong P.T."/>
            <person name="Virk R.K."/>
            <person name="Muller C.I."/>
            <person name="Hofmann W.-K."/>
            <person name="Koeffler H.P."/>
        </authorList>
    </citation>
    <scope>FUNCTION</scope>
    <scope>TISSUE SPECIFICITY</scope>
    <scope>INDUCTION</scope>
</reference>
<reference key="16">
    <citation type="journal article" date="2009" name="EMBO Rep.">
        <title>REDD1, an inhibitor of mTOR signalling, is regulated by the CUL4A-DDB1 ubiquitin ligase.</title>
        <authorList>
            <person name="Katiyar S."/>
            <person name="Liu E."/>
            <person name="Knutzen C.A."/>
            <person name="Lang E.S."/>
            <person name="Lombardo C.R."/>
            <person name="Sankar S."/>
            <person name="Toth J.I."/>
            <person name="Petroski M.D."/>
            <person name="Ronai Z."/>
            <person name="Chiang G.G."/>
        </authorList>
    </citation>
    <scope>FUNCTION</scope>
    <scope>UBIQUITINATION</scope>
    <scope>INTERACTION WITH BTRC</scope>
    <scope>IDENTIFICATION IN A COMPLEX WITH CUL4A; DDB1 AND BTRC</scope>
    <scope>IDENTIFICATION BY MASS SPECTROMETRY</scope>
    <scope>PARTIAL PROTEIN SEQUENCE</scope>
    <scope>MUTAGENESIS OF SER-19; THR-23 AND THR-25</scope>
    <scope>PHOSPHORYLATION AT SER-19; THR-23; THR-25 AND SER-121</scope>
</reference>
<reference key="17">
    <citation type="journal article" date="2011" name="Oncogene">
        <title>TXNIP potentiates Redd1-induced mTOR suppression through stabilization of Redd1.</title>
        <authorList>
            <person name="Jin H.O."/>
            <person name="Seo S.K."/>
            <person name="Kim Y.S."/>
            <person name="Woo S.H."/>
            <person name="Lee K.H."/>
            <person name="Yi J.Y."/>
            <person name="Lee S.J."/>
            <person name="Choe T.B."/>
            <person name="Lee J.H."/>
            <person name="An S."/>
            <person name="Hong S.I."/>
            <person name="Park I.C."/>
        </authorList>
    </citation>
    <scope>INTERACTION WITH TXNIP</scope>
    <scope>FUNCTION</scope>
</reference>
<reference key="18">
    <citation type="journal article" date="2013" name="J. Proteome Res.">
        <title>Toward a comprehensive characterization of a human cancer cell phosphoproteome.</title>
        <authorList>
            <person name="Zhou H."/>
            <person name="Di Palma S."/>
            <person name="Preisinger C."/>
            <person name="Peng M."/>
            <person name="Polat A.N."/>
            <person name="Heck A.J."/>
            <person name="Mohammed S."/>
        </authorList>
    </citation>
    <scope>IDENTIFICATION BY MASS SPECTROMETRY [LARGE SCALE ANALYSIS]</scope>
    <source>
        <tissue>Erythroleukemia</tissue>
    </source>
</reference>
<reference key="19">
    <citation type="journal article" date="2010" name="Biochemistry">
        <title>Structural analysis and functional implications of the negative mTORC1 regulator REDD1.</title>
        <authorList>
            <person name="Vega-Rubin-de-Celis S."/>
            <person name="Abdallah Z."/>
            <person name="Kinch L."/>
            <person name="Grishin N.V."/>
            <person name="Brugarolas J."/>
            <person name="Zhang X."/>
        </authorList>
    </citation>
    <scope>X-RAY CRYSTALLOGRAPHY (2.0 ANGSTROMS) OF 89-226</scope>
    <scope>FUNCTION</scope>
    <scope>SUBUNIT</scope>
    <scope>INDUCTION</scope>
    <scope>MUTAGENESIS OF SER-103; ARG-133; SER-137; PRO-139; CYS-140; LYS-219; LEU-221 AND TYR-222</scope>
</reference>
<dbReference type="EMBL" id="AY090097">
    <property type="protein sequence ID" value="AAM10442.1"/>
    <property type="molecule type" value="mRNA"/>
</dbReference>
<dbReference type="EMBL" id="AF335324">
    <property type="protein sequence ID" value="AAL38424.1"/>
    <property type="molecule type" value="mRNA"/>
</dbReference>
<dbReference type="EMBL" id="AL136668">
    <property type="protein sequence ID" value="CAB66603.1"/>
    <property type="molecule type" value="mRNA"/>
</dbReference>
<dbReference type="EMBL" id="AK000507">
    <property type="protein sequence ID" value="BAA91214.1"/>
    <property type="molecule type" value="mRNA"/>
</dbReference>
<dbReference type="EMBL" id="AL683820">
    <property type="status" value="NOT_ANNOTATED_CDS"/>
    <property type="molecule type" value="Genomic_DNA"/>
</dbReference>
<dbReference type="EMBL" id="CH471083">
    <property type="protein sequence ID" value="EAW54452.1"/>
    <property type="molecule type" value="Genomic_DNA"/>
</dbReference>
<dbReference type="EMBL" id="BC000708">
    <property type="protein sequence ID" value="AAH00708.1"/>
    <property type="molecule type" value="mRNA"/>
</dbReference>
<dbReference type="EMBL" id="BC007714">
    <property type="protein sequence ID" value="AAH07714.1"/>
    <property type="molecule type" value="mRNA"/>
</dbReference>
<dbReference type="EMBL" id="BC015236">
    <property type="protein sequence ID" value="AAH15236.1"/>
    <property type="molecule type" value="mRNA"/>
</dbReference>
<dbReference type="CCDS" id="CCDS7315.1"/>
<dbReference type="RefSeq" id="NP_061931.1">
    <property type="nucleotide sequence ID" value="NM_019058.4"/>
</dbReference>
<dbReference type="PDB" id="3LQ9">
    <property type="method" value="X-ray"/>
    <property type="resolution" value="2.00 A"/>
    <property type="chains" value="A/B=89-226"/>
</dbReference>
<dbReference type="PDB" id="7MOP">
    <property type="method" value="EM"/>
    <property type="resolution" value="3.30 A"/>
    <property type="chains" value="B=1-232"/>
</dbReference>
<dbReference type="PDBsum" id="3LQ9"/>
<dbReference type="PDBsum" id="7MOP"/>
<dbReference type="EMDB" id="EMD-23925"/>
<dbReference type="SMR" id="Q9NX09"/>
<dbReference type="BioGRID" id="120028">
    <property type="interactions" value="23"/>
</dbReference>
<dbReference type="CORUM" id="Q9NX09"/>
<dbReference type="FunCoup" id="Q9NX09">
    <property type="interactions" value="1418"/>
</dbReference>
<dbReference type="IntAct" id="Q9NX09">
    <property type="interactions" value="25"/>
</dbReference>
<dbReference type="MINT" id="Q9NX09"/>
<dbReference type="STRING" id="9606.ENSP00000307305"/>
<dbReference type="DrugBank" id="DB06048">
    <property type="generic name" value="RTP-801i"/>
</dbReference>
<dbReference type="iPTMnet" id="Q9NX09"/>
<dbReference type="PhosphoSitePlus" id="Q9NX09"/>
<dbReference type="BioMuta" id="DDIT4"/>
<dbReference type="DMDM" id="74753036"/>
<dbReference type="jPOST" id="Q9NX09"/>
<dbReference type="MassIVE" id="Q9NX09"/>
<dbReference type="PaxDb" id="9606-ENSP00000307305"/>
<dbReference type="PeptideAtlas" id="Q9NX09"/>
<dbReference type="ProteomicsDB" id="83020"/>
<dbReference type="Pumba" id="Q9NX09"/>
<dbReference type="Antibodypedia" id="29243">
    <property type="antibodies" value="330 antibodies from 38 providers"/>
</dbReference>
<dbReference type="DNASU" id="54541"/>
<dbReference type="Ensembl" id="ENST00000307365.4">
    <property type="protein sequence ID" value="ENSP00000307305.3"/>
    <property type="gene ID" value="ENSG00000168209.6"/>
</dbReference>
<dbReference type="Ensembl" id="ENST00000491934.3">
    <property type="protein sequence ID" value="ENSP00000506356.1"/>
    <property type="gene ID" value="ENSG00000168209.6"/>
</dbReference>
<dbReference type="GeneID" id="54541"/>
<dbReference type="KEGG" id="hsa:54541"/>
<dbReference type="MANE-Select" id="ENST00000307365.4">
    <property type="protein sequence ID" value="ENSP00000307305.3"/>
    <property type="RefSeq nucleotide sequence ID" value="NM_019058.4"/>
    <property type="RefSeq protein sequence ID" value="NP_061931.1"/>
</dbReference>
<dbReference type="UCSC" id="uc001jsx.2">
    <property type="organism name" value="human"/>
</dbReference>
<dbReference type="AGR" id="HGNC:24944"/>
<dbReference type="CTD" id="54541"/>
<dbReference type="DisGeNET" id="54541"/>
<dbReference type="GeneCards" id="DDIT4"/>
<dbReference type="HGNC" id="HGNC:24944">
    <property type="gene designation" value="DDIT4"/>
</dbReference>
<dbReference type="HPA" id="ENSG00000168209">
    <property type="expression patterns" value="Low tissue specificity"/>
</dbReference>
<dbReference type="MIM" id="607729">
    <property type="type" value="gene"/>
</dbReference>
<dbReference type="neXtProt" id="NX_Q9NX09"/>
<dbReference type="OpenTargets" id="ENSG00000168209"/>
<dbReference type="PharmGKB" id="PA134977994"/>
<dbReference type="VEuPathDB" id="HostDB:ENSG00000168209"/>
<dbReference type="eggNOG" id="ENOG502RB72">
    <property type="taxonomic scope" value="Eukaryota"/>
</dbReference>
<dbReference type="GeneTree" id="ENSGT00530000063652"/>
<dbReference type="HOGENOM" id="CLU_086145_1_0_1"/>
<dbReference type="InParanoid" id="Q9NX09"/>
<dbReference type="OMA" id="MPGLWER"/>
<dbReference type="OrthoDB" id="10018535at2759"/>
<dbReference type="PAN-GO" id="Q9NX09">
    <property type="GO annotations" value="4 GO annotations based on evolutionary models"/>
</dbReference>
<dbReference type="PhylomeDB" id="Q9NX09"/>
<dbReference type="TreeFam" id="TF105007"/>
<dbReference type="PathwayCommons" id="Q9NX09"/>
<dbReference type="Reactome" id="R-HSA-5628897">
    <property type="pathway name" value="TP53 Regulates Metabolic Genes"/>
</dbReference>
<dbReference type="SignaLink" id="Q9NX09"/>
<dbReference type="SIGNOR" id="Q9NX09"/>
<dbReference type="BioGRID-ORCS" id="54541">
    <property type="hits" value="26 hits in 1170 CRISPR screens"/>
</dbReference>
<dbReference type="CD-CODE" id="B5B9A610">
    <property type="entry name" value="PML body"/>
</dbReference>
<dbReference type="ChiTaRS" id="DDIT4">
    <property type="organism name" value="human"/>
</dbReference>
<dbReference type="EvolutionaryTrace" id="Q9NX09"/>
<dbReference type="GeneWiki" id="DDIT4"/>
<dbReference type="GenomeRNAi" id="54541"/>
<dbReference type="Pharos" id="Q9NX09">
    <property type="development level" value="Tbio"/>
</dbReference>
<dbReference type="PRO" id="PR:Q9NX09"/>
<dbReference type="Proteomes" id="UP000005640">
    <property type="component" value="Chromosome 10"/>
</dbReference>
<dbReference type="RNAct" id="Q9NX09">
    <property type="molecule type" value="protein"/>
</dbReference>
<dbReference type="Bgee" id="ENSG00000168209">
    <property type="expression patterns" value="Expressed in pericardium and 210 other cell types or tissues"/>
</dbReference>
<dbReference type="ExpressionAtlas" id="Q9NX09">
    <property type="expression patterns" value="baseline and differential"/>
</dbReference>
<dbReference type="GO" id="GO:0005737">
    <property type="term" value="C:cytoplasm"/>
    <property type="evidence" value="ECO:0000314"/>
    <property type="project" value="UniProtKB"/>
</dbReference>
<dbReference type="GO" id="GO:0005829">
    <property type="term" value="C:cytosol"/>
    <property type="evidence" value="ECO:0000314"/>
    <property type="project" value="HPA"/>
</dbReference>
<dbReference type="GO" id="GO:0005739">
    <property type="term" value="C:mitochondrion"/>
    <property type="evidence" value="ECO:0007669"/>
    <property type="project" value="UniProtKB-SubCell"/>
</dbReference>
<dbReference type="GO" id="GO:0071889">
    <property type="term" value="F:14-3-3 protein binding"/>
    <property type="evidence" value="ECO:0000318"/>
    <property type="project" value="GO_Central"/>
</dbReference>
<dbReference type="GO" id="GO:0006915">
    <property type="term" value="P:apoptotic process"/>
    <property type="evidence" value="ECO:0000318"/>
    <property type="project" value="GO_Central"/>
</dbReference>
<dbReference type="GO" id="GO:0007420">
    <property type="term" value="P:brain development"/>
    <property type="evidence" value="ECO:0000250"/>
    <property type="project" value="UniProtKB"/>
</dbReference>
<dbReference type="GO" id="GO:0071549">
    <property type="term" value="P:cellular response to dexamethasone stimulus"/>
    <property type="evidence" value="ECO:0007669"/>
    <property type="project" value="Ensembl"/>
</dbReference>
<dbReference type="GO" id="GO:0051607">
    <property type="term" value="P:defense response to virus"/>
    <property type="evidence" value="ECO:0000314"/>
    <property type="project" value="UniProtKB"/>
</dbReference>
<dbReference type="GO" id="GO:0035556">
    <property type="term" value="P:intracellular signal transduction"/>
    <property type="evidence" value="ECO:0000250"/>
    <property type="project" value="UniProtKB"/>
</dbReference>
<dbReference type="GO" id="GO:0042771">
    <property type="term" value="P:intrinsic apoptotic signaling pathway in response to DNA damage by p53 class mediator"/>
    <property type="evidence" value="ECO:0000250"/>
    <property type="project" value="UniProtKB"/>
</dbReference>
<dbReference type="GO" id="GO:0045820">
    <property type="term" value="P:negative regulation of glycolytic process"/>
    <property type="evidence" value="ECO:0007669"/>
    <property type="project" value="Ensembl"/>
</dbReference>
<dbReference type="GO" id="GO:0032007">
    <property type="term" value="P:negative regulation of TOR signaling"/>
    <property type="evidence" value="ECO:0000315"/>
    <property type="project" value="UniProtKB"/>
</dbReference>
<dbReference type="GO" id="GO:0030182">
    <property type="term" value="P:neuron differentiation"/>
    <property type="evidence" value="ECO:0000250"/>
    <property type="project" value="UniProtKB"/>
</dbReference>
<dbReference type="GO" id="GO:0001764">
    <property type="term" value="P:neuron migration"/>
    <property type="evidence" value="ECO:0000250"/>
    <property type="project" value="UniProtKB"/>
</dbReference>
<dbReference type="GO" id="GO:0048011">
    <property type="term" value="P:neurotrophin TRK receptor signaling pathway"/>
    <property type="evidence" value="ECO:0000250"/>
    <property type="project" value="UniProtKB"/>
</dbReference>
<dbReference type="GO" id="GO:0032984">
    <property type="term" value="P:protein-containing complex disassembly"/>
    <property type="evidence" value="ECO:0007669"/>
    <property type="project" value="Ensembl"/>
</dbReference>
<dbReference type="GO" id="GO:0072593">
    <property type="term" value="P:reactive oxygen species metabolic process"/>
    <property type="evidence" value="ECO:0007669"/>
    <property type="project" value="Ensembl"/>
</dbReference>
<dbReference type="GO" id="GO:0001666">
    <property type="term" value="P:response to hypoxia"/>
    <property type="evidence" value="ECO:0000314"/>
    <property type="project" value="UniProtKB"/>
</dbReference>
<dbReference type="FunFam" id="3.90.470.40:FF:000001">
    <property type="entry name" value="DNA damage-inducible transcript 4 protein"/>
    <property type="match status" value="1"/>
</dbReference>
<dbReference type="Gene3D" id="3.90.470.40">
    <property type="entry name" value="RTP801-like"/>
    <property type="match status" value="1"/>
</dbReference>
<dbReference type="InterPro" id="IPR012918">
    <property type="entry name" value="RTP801-like"/>
</dbReference>
<dbReference type="InterPro" id="IPR038281">
    <property type="entry name" value="RTP801-like_C_sf"/>
</dbReference>
<dbReference type="PANTHER" id="PTHR12478:SF7">
    <property type="entry name" value="DNA DAMAGE-INDUCIBLE TRANSCRIPT 4 PROTEIN"/>
    <property type="match status" value="1"/>
</dbReference>
<dbReference type="PANTHER" id="PTHR12478">
    <property type="entry name" value="DNA-DAMAGE-INDUCIBLE TRANSCRIPT 4 PROTEIN DDIT4"/>
    <property type="match status" value="1"/>
</dbReference>
<dbReference type="Pfam" id="PF07809">
    <property type="entry name" value="RTP801_C"/>
    <property type="match status" value="1"/>
</dbReference>
<proteinExistence type="evidence at protein level"/>
<organism>
    <name type="scientific">Homo sapiens</name>
    <name type="common">Human</name>
    <dbReference type="NCBI Taxonomy" id="9606"/>
    <lineage>
        <taxon>Eukaryota</taxon>
        <taxon>Metazoa</taxon>
        <taxon>Chordata</taxon>
        <taxon>Craniata</taxon>
        <taxon>Vertebrata</taxon>
        <taxon>Euteleostomi</taxon>
        <taxon>Mammalia</taxon>
        <taxon>Eutheria</taxon>
        <taxon>Euarchontoglires</taxon>
        <taxon>Primates</taxon>
        <taxon>Haplorrhini</taxon>
        <taxon>Catarrhini</taxon>
        <taxon>Hominidae</taxon>
        <taxon>Homo</taxon>
    </lineage>
</organism>
<evidence type="ECO:0000250" key="1"/>
<evidence type="ECO:0000256" key="2">
    <source>
        <dbReference type="SAM" id="MobiDB-lite"/>
    </source>
</evidence>
<evidence type="ECO:0000269" key="3">
    <source>
    </source>
</evidence>
<evidence type="ECO:0000269" key="4">
    <source>
    </source>
</evidence>
<evidence type="ECO:0000269" key="5">
    <source>
    </source>
</evidence>
<evidence type="ECO:0000269" key="6">
    <source>
    </source>
</evidence>
<evidence type="ECO:0000269" key="7">
    <source>
    </source>
</evidence>
<evidence type="ECO:0000269" key="8">
    <source>
    </source>
</evidence>
<evidence type="ECO:0000269" key="9">
    <source>
    </source>
</evidence>
<evidence type="ECO:0000269" key="10">
    <source>
    </source>
</evidence>
<evidence type="ECO:0000269" key="11">
    <source>
    </source>
</evidence>
<evidence type="ECO:0000269" key="12">
    <source>
    </source>
</evidence>
<evidence type="ECO:0000269" key="13">
    <source>
    </source>
</evidence>
<evidence type="ECO:0000269" key="14">
    <source>
    </source>
</evidence>
<evidence type="ECO:0000269" key="15">
    <source>
    </source>
</evidence>
<evidence type="ECO:0000305" key="16"/>
<evidence type="ECO:0007829" key="17">
    <source>
        <dbReference type="PDB" id="3LQ9"/>
    </source>
</evidence>
<evidence type="ECO:0007829" key="18">
    <source>
        <dbReference type="PDB" id="7MOP"/>
    </source>
</evidence>
<feature type="chain" id="PRO_0000307197" description="DNA damage-inducible transcript 4 protein">
    <location>
        <begin position="1"/>
        <end position="232"/>
    </location>
</feature>
<feature type="region of interest" description="Disordered" evidence="2">
    <location>
        <begin position="1"/>
        <end position="71"/>
    </location>
</feature>
<feature type="compositionally biased region" description="Low complexity" evidence="2">
    <location>
        <begin position="9"/>
        <end position="22"/>
    </location>
</feature>
<feature type="modified residue" description="Phosphoserine" evidence="13">
    <location>
        <position position="19"/>
    </location>
</feature>
<feature type="modified residue" description="Phosphothreonine" evidence="13">
    <location>
        <position position="23"/>
    </location>
</feature>
<feature type="modified residue" description="Phosphothreonine" evidence="13">
    <location>
        <position position="25"/>
    </location>
</feature>
<feature type="modified residue" description="Phosphoserine" evidence="13">
    <location>
        <position position="121"/>
    </location>
</feature>
<feature type="mutagenesis site" description="Strongly inhibits proteasomal degradation." evidence="13">
    <original>S</original>
    <variation>A</variation>
    <location>
        <position position="19"/>
    </location>
</feature>
<feature type="mutagenesis site" description="Strongly inhibits proteasomal degradation. Strongly inhibits proteasomal degradation; when associated with A-25." evidence="13">
    <original>T</original>
    <variation>A</variation>
    <location>
        <position position="23"/>
    </location>
</feature>
<feature type="mutagenesis site" description="Strongly inhibits proteasomal degradation; when associated with A-23." evidence="13">
    <original>T</original>
    <variation>A</variation>
    <location>
        <position position="25"/>
    </location>
</feature>
<feature type="mutagenesis site" description="No effect on inhibition of mTORC1." evidence="14">
    <original>S</original>
    <variation>L</variation>
    <variation>W</variation>
    <location>
        <position position="103"/>
    </location>
</feature>
<feature type="mutagenesis site" description="No effect on inhibition of mTORC1." evidence="14">
    <original>R</original>
    <variation>A</variation>
    <location>
        <position position="133"/>
    </location>
</feature>
<feature type="mutagenesis site" description="No effect on inhibition of mTORC1." evidence="14">
    <original>S</original>
    <variation>A</variation>
    <variation>D</variation>
    <location>
        <position position="137"/>
    </location>
</feature>
<feature type="mutagenesis site" description="Abolishes inhibition of mTORC1." evidence="14">
    <original>P</original>
    <variation>A</variation>
    <location>
        <position position="139"/>
    </location>
</feature>
<feature type="mutagenesis site" description="Mildly reduces inhibition of mTORC1." evidence="14">
    <original>C</original>
    <variation>S</variation>
    <location>
        <position position="140"/>
    </location>
</feature>
<feature type="mutagenesis site" description="Reduces inhibition of mTORC1. Abolishes inhibition of mTORC1; when associated with A-222." evidence="14">
    <original>K</original>
    <variation>A</variation>
    <location>
        <position position="219"/>
    </location>
</feature>
<feature type="mutagenesis site" description="Reduces inhibition of mTORC1." evidence="14">
    <original>L</original>
    <variation>A</variation>
    <location>
        <position position="221"/>
    </location>
</feature>
<feature type="mutagenesis site" description="Reduces inhibition of mTORC1. Abolishes inhibition of mTORC1; when associated with A-219." evidence="14">
    <original>Y</original>
    <variation>A</variation>
    <location>
        <position position="222"/>
    </location>
</feature>
<feature type="sequence conflict" description="In Ref. 3; CAB66603." evidence="16" ref="3">
    <original>L</original>
    <variation>P</variation>
    <location>
        <position position="228"/>
    </location>
</feature>
<feature type="turn" evidence="18">
    <location>
        <begin position="6"/>
        <end position="8"/>
    </location>
</feature>
<feature type="helix" evidence="17">
    <location>
        <begin position="90"/>
        <end position="104"/>
    </location>
</feature>
<feature type="strand" evidence="17">
    <location>
        <begin position="107"/>
        <end position="112"/>
    </location>
</feature>
<feature type="helix" evidence="17">
    <location>
        <begin position="121"/>
        <end position="135"/>
    </location>
</feature>
<feature type="helix" evidence="17">
    <location>
        <begin position="141"/>
        <end position="144"/>
    </location>
</feature>
<feature type="strand" evidence="17">
    <location>
        <begin position="145"/>
        <end position="153"/>
    </location>
</feature>
<feature type="strand" evidence="17">
    <location>
        <begin position="156"/>
        <end position="165"/>
    </location>
</feature>
<feature type="strand" evidence="17">
    <location>
        <begin position="173"/>
        <end position="180"/>
    </location>
</feature>
<feature type="strand" evidence="17">
    <location>
        <begin position="214"/>
        <end position="220"/>
    </location>
</feature>
<comment type="function">
    <text evidence="1 6 8 10 11 12 13 14 15">Regulates cell growth, proliferation and survival via inhibition of the activity of the mammalian target of rapamycin complex 1 (mTORC1). Inhibition of mTORC1 is mediated by a pathway that involves DDIT4/REDD1, AKT1, the TSC1-TSC2 complex and the GTPase RHEB. Plays an important role in responses to cellular energy levels and cellular stress, including responses to hypoxia and DNA damage. Regulates p53/TP53-mediated apoptosis in response to DNA damage via its effect on mTORC1 activity. Its role in the response to hypoxia depends on the cell type; it mediates mTORC1 inhibition in fibroblasts and thymocytes, but not in hepatocytes (By similarity). Required for mTORC1-mediated defense against viral protein synthesis and virus replication (By similarity). Inhibits neuronal differentiation and neurite outgrowth mediated by NGF via its effect on mTORC1 activity. Required for normal neuron migration during embryonic brain development. Plays a role in neuronal cell death.</text>
</comment>
<comment type="subunit">
    <text evidence="13 14 15">Monomer. Interacts with BTRC. Identified in a complex with CUL4A, DDB1 and BTRC. Interacts with TXNIP; this inhibits the proteasomal degradation of DDIT4.</text>
</comment>
<comment type="interaction">
    <interactant intactId="EBI-715104">
        <id>Q9NX09</id>
    </interactant>
    <interactant intactId="EBI-6425864">
        <id>Q3SYB3</id>
        <label>FOXD4L6</label>
    </interactant>
    <organismsDiffer>false</organismsDiffer>
    <experiments>3</experiments>
</comment>
<comment type="interaction">
    <interactant intactId="EBI-715104">
        <id>Q9NX09</id>
    </interactant>
    <interactant intactId="EBI-751001">
        <id>Q14145</id>
        <label>KEAP1</label>
    </interactant>
    <organismsDiffer>false</organismsDiffer>
    <experiments>3</experiments>
</comment>
<comment type="interaction">
    <interactant intactId="EBI-715104">
        <id>Q9NX09</id>
    </interactant>
    <interactant intactId="EBI-8472267">
        <id>P57682</id>
        <label>KLF3</label>
    </interactant>
    <organismsDiffer>false</organismsDiffer>
    <experiments>3</experiments>
</comment>
<comment type="interaction">
    <interactant intactId="EBI-715104">
        <id>Q9NX09</id>
    </interactant>
    <interactant intactId="EBI-10698053">
        <id>Q9Y483-4</id>
        <label>MTF2</label>
    </interactant>
    <organismsDiffer>false</organismsDiffer>
    <experiments>3</experiments>
</comment>
<comment type="interaction">
    <interactant intactId="EBI-715104">
        <id>Q9NX09</id>
    </interactant>
    <interactant intactId="EBI-716404">
        <id>P16284</id>
        <label>PECAM1</label>
    </interactant>
    <organismsDiffer>false</organismsDiffer>
    <experiments>3</experiments>
</comment>
<comment type="interaction">
    <interactant intactId="EBI-715104">
        <id>Q9NX09</id>
    </interactant>
    <interactant intactId="EBI-713832">
        <id>Q6P1K2</id>
        <label>PMF1</label>
    </interactant>
    <organismsDiffer>false</organismsDiffer>
    <experiments>3</experiments>
</comment>
<comment type="interaction">
    <interactant intactId="EBI-715104">
        <id>Q9NX09</id>
    </interactant>
    <interactant intactId="EBI-12832276">
        <id>P08195-4</id>
        <label>SLC3A2</label>
    </interactant>
    <organismsDiffer>false</organismsDiffer>
    <experiments>3</experiments>
</comment>
<comment type="interaction">
    <interactant intactId="EBI-715104">
        <id>Q9NX09</id>
    </interactant>
    <interactant intactId="EBI-473850">
        <id>P61086</id>
        <label>UBE2K</label>
    </interactant>
    <organismsDiffer>false</organismsDiffer>
    <experiments>3</experiments>
</comment>
<comment type="interaction">
    <interactant intactId="EBI-715104">
        <id>Q9NX09</id>
    </interactant>
    <interactant intactId="EBI-12157263">
        <id>P40337-2</id>
        <label>VHL</label>
    </interactant>
    <organismsDiffer>false</organismsDiffer>
    <experiments>3</experiments>
</comment>
<comment type="interaction">
    <interactant intactId="EBI-715104">
        <id>Q9NX09</id>
    </interactant>
    <interactant intactId="EBI-6427899">
        <id>P58304</id>
        <label>VSX2</label>
    </interactant>
    <organismsDiffer>false</organismsDiffer>
    <experiments>3</experiments>
</comment>
<comment type="interaction">
    <interactant intactId="EBI-715104">
        <id>Q9NX09</id>
    </interactant>
    <interactant intactId="EBI-25831733">
        <id>Q96MN9-2</id>
        <label>ZNF488</label>
    </interactant>
    <organismsDiffer>false</organismsDiffer>
    <experiments>3</experiments>
</comment>
<comment type="subcellular location">
    <subcellularLocation>
        <location evidence="1">Mitochondrion</location>
    </subcellularLocation>
    <subcellularLocation>
        <location evidence="4">Cytoplasm</location>
        <location evidence="4">Cytosol</location>
    </subcellularLocation>
</comment>
<comment type="tissue specificity">
    <text evidence="3 4 11 12">Broadly expressed, with lowest levels in brain, skeletal muscle and intestine. Up-regulated in substantia nigra neurons from Parkinson disease patients (at protein level).</text>
</comment>
<comment type="induction">
    <text evidence="3 4 5 7 9 12 14">Up-regulated in fibroblasts upon ionizing radiation, via a TP53-dependent pathway. Up-regulated by TP63 in primary keratinocytes, and down-regulated during keratinocyte differentiation. Up-regulated upon DNA alkylation. Up-regulated by amyloid beta-peptide and retinoic acid. Up-regulated by hypoxia, via a PI3K and HIF1A-dependent but TP53/TP63-independent mechanism (at protein level).</text>
</comment>
<comment type="PTM">
    <text evidence="13">Phosphorylated by GSK3B; this promotes proteasomal degradation.</text>
</comment>
<comment type="PTM">
    <text evidence="13">Polyubiquitinated by a DCX (DDB1-CUL4A-RBX1) E3 ubiquitin-protein ligase complex with BTRC as substrate-recognition component, leading to its proteasomal degradation.</text>
</comment>
<comment type="similarity">
    <text evidence="16">Belongs to the DDIT4 family.</text>
</comment>
<comment type="online information" name="Atlas of Genetics and Cytogenetics in Oncology and Haematology">
    <link uri="https://atlasgeneticsoncology.org/gene/45802/DDIT4"/>
</comment>
<accession>Q9NX09</accession>
<accession>Q9H0S3</accession>
<protein>
    <recommendedName>
        <fullName>DNA damage-inducible transcript 4 protein</fullName>
    </recommendedName>
    <alternativeName>
        <fullName>HIF-1 responsive protein RTP801</fullName>
    </alternativeName>
    <alternativeName>
        <fullName>Protein regulated in development and DNA damage response 1</fullName>
        <shortName>REDD-1</shortName>
    </alternativeName>
</protein>
<sequence>MPSLWDRFSSSSTSSSPSSLPRTPTPDRPPRSAWGSATREEGFDRSTSLESSDCESLDSSNSGFGPEEDTAYLDGVSLPDFELLSDPEDEHLCANLMQLLQESLAQARLGSRRPARLLMPSQLVSQVGKELLRLAYSEPCGLRGALLDVCVEQGKSCHSVGQLALDPSLVPTFQLTLVLRLDSRLWPKIQGLFSSANSPFLPGFSQSLTLSTGFRVIKKKLYSSEQLLIEEC</sequence>
<gene>
    <name type="primary">DDIT4</name>
    <name type="synonym">REDD1</name>
    <name type="synonym">RTP801</name>
</gene>